<name>RN3P1_HUMAN</name>
<proteinExistence type="uncertain"/>
<reference key="1">
    <citation type="journal article" date="2004" name="Nat. Genet.">
        <title>Complete sequencing and characterization of 21,243 full-length human cDNAs.</title>
        <authorList>
            <person name="Ota T."/>
            <person name="Suzuki Y."/>
            <person name="Nishikawa T."/>
            <person name="Otsuki T."/>
            <person name="Sugiyama T."/>
            <person name="Irie R."/>
            <person name="Wakamatsu A."/>
            <person name="Hayashi K."/>
            <person name="Sato H."/>
            <person name="Nagai K."/>
            <person name="Kimura K."/>
            <person name="Makita H."/>
            <person name="Sekine M."/>
            <person name="Obayashi M."/>
            <person name="Nishi T."/>
            <person name="Shibahara T."/>
            <person name="Tanaka T."/>
            <person name="Ishii S."/>
            <person name="Yamamoto J."/>
            <person name="Saito K."/>
            <person name="Kawai Y."/>
            <person name="Isono Y."/>
            <person name="Nakamura Y."/>
            <person name="Nagahari K."/>
            <person name="Murakami K."/>
            <person name="Yasuda T."/>
            <person name="Iwayanagi T."/>
            <person name="Wagatsuma M."/>
            <person name="Shiratori A."/>
            <person name="Sudo H."/>
            <person name="Hosoiri T."/>
            <person name="Kaku Y."/>
            <person name="Kodaira H."/>
            <person name="Kondo H."/>
            <person name="Sugawara M."/>
            <person name="Takahashi M."/>
            <person name="Kanda K."/>
            <person name="Yokoi T."/>
            <person name="Furuya T."/>
            <person name="Kikkawa E."/>
            <person name="Omura Y."/>
            <person name="Abe K."/>
            <person name="Kamihara K."/>
            <person name="Katsuta N."/>
            <person name="Sato K."/>
            <person name="Tanikawa M."/>
            <person name="Yamazaki M."/>
            <person name="Ninomiya K."/>
            <person name="Ishibashi T."/>
            <person name="Yamashita H."/>
            <person name="Murakawa K."/>
            <person name="Fujimori K."/>
            <person name="Tanai H."/>
            <person name="Kimata M."/>
            <person name="Watanabe M."/>
            <person name="Hiraoka S."/>
            <person name="Chiba Y."/>
            <person name="Ishida S."/>
            <person name="Ono Y."/>
            <person name="Takiguchi S."/>
            <person name="Watanabe S."/>
            <person name="Yosida M."/>
            <person name="Hotuta T."/>
            <person name="Kusano J."/>
            <person name="Kanehori K."/>
            <person name="Takahashi-Fujii A."/>
            <person name="Hara H."/>
            <person name="Tanase T.-O."/>
            <person name="Nomura Y."/>
            <person name="Togiya S."/>
            <person name="Komai F."/>
            <person name="Hara R."/>
            <person name="Takeuchi K."/>
            <person name="Arita M."/>
            <person name="Imose N."/>
            <person name="Musashino K."/>
            <person name="Yuuki H."/>
            <person name="Oshima A."/>
            <person name="Sasaki N."/>
            <person name="Aotsuka S."/>
            <person name="Yoshikawa Y."/>
            <person name="Matsunawa H."/>
            <person name="Ichihara T."/>
            <person name="Shiohata N."/>
            <person name="Sano S."/>
            <person name="Moriya S."/>
            <person name="Momiyama H."/>
            <person name="Satoh N."/>
            <person name="Takami S."/>
            <person name="Terashima Y."/>
            <person name="Suzuki O."/>
            <person name="Nakagawa S."/>
            <person name="Senoh A."/>
            <person name="Mizoguchi H."/>
            <person name="Goto Y."/>
            <person name="Shimizu F."/>
            <person name="Wakebe H."/>
            <person name="Hishigaki H."/>
            <person name="Watanabe T."/>
            <person name="Sugiyama A."/>
            <person name="Takemoto M."/>
            <person name="Kawakami B."/>
            <person name="Yamazaki M."/>
            <person name="Watanabe K."/>
            <person name="Kumagai A."/>
            <person name="Itakura S."/>
            <person name="Fukuzumi Y."/>
            <person name="Fujimori Y."/>
            <person name="Komiyama M."/>
            <person name="Tashiro H."/>
            <person name="Tanigami A."/>
            <person name="Fujiwara T."/>
            <person name="Ono T."/>
            <person name="Yamada K."/>
            <person name="Fujii Y."/>
            <person name="Ozaki K."/>
            <person name="Hirao M."/>
            <person name="Ohmori Y."/>
            <person name="Kawabata A."/>
            <person name="Hikiji T."/>
            <person name="Kobatake N."/>
            <person name="Inagaki H."/>
            <person name="Ikema Y."/>
            <person name="Okamoto S."/>
            <person name="Okitani R."/>
            <person name="Kawakami T."/>
            <person name="Noguchi S."/>
            <person name="Itoh T."/>
            <person name="Shigeta K."/>
            <person name="Senba T."/>
            <person name="Matsumura K."/>
            <person name="Nakajima Y."/>
            <person name="Mizuno T."/>
            <person name="Morinaga M."/>
            <person name="Sasaki M."/>
            <person name="Togashi T."/>
            <person name="Oyama M."/>
            <person name="Hata H."/>
            <person name="Watanabe M."/>
            <person name="Komatsu T."/>
            <person name="Mizushima-Sugano J."/>
            <person name="Satoh T."/>
            <person name="Shirai Y."/>
            <person name="Takahashi Y."/>
            <person name="Nakagawa K."/>
            <person name="Okumura K."/>
            <person name="Nagase T."/>
            <person name="Nomura N."/>
            <person name="Kikuchi H."/>
            <person name="Masuho Y."/>
            <person name="Yamashita R."/>
            <person name="Nakai K."/>
            <person name="Yada T."/>
            <person name="Nakamura Y."/>
            <person name="Ohara O."/>
            <person name="Isogai T."/>
            <person name="Sugano S."/>
        </authorList>
    </citation>
    <scope>NUCLEOTIDE SEQUENCE [LARGE SCALE MRNA]</scope>
    <source>
        <tissue>Placenta</tissue>
        <tissue>Thymus</tissue>
    </source>
</reference>
<reference key="2">
    <citation type="journal article" date="2004" name="Nature">
        <title>The sequence and analysis of duplication-rich human chromosome 16.</title>
        <authorList>
            <person name="Martin J."/>
            <person name="Han C."/>
            <person name="Gordon L.A."/>
            <person name="Terry A."/>
            <person name="Prabhakar S."/>
            <person name="She X."/>
            <person name="Xie G."/>
            <person name="Hellsten U."/>
            <person name="Chan Y.M."/>
            <person name="Altherr M."/>
            <person name="Couronne O."/>
            <person name="Aerts A."/>
            <person name="Bajorek E."/>
            <person name="Black S."/>
            <person name="Blumer H."/>
            <person name="Branscomb E."/>
            <person name="Brown N.C."/>
            <person name="Bruno W.J."/>
            <person name="Buckingham J.M."/>
            <person name="Callen D.F."/>
            <person name="Campbell C.S."/>
            <person name="Campbell M.L."/>
            <person name="Campbell E.W."/>
            <person name="Caoile C."/>
            <person name="Challacombe J.F."/>
            <person name="Chasteen L.A."/>
            <person name="Chertkov O."/>
            <person name="Chi H.C."/>
            <person name="Christensen M."/>
            <person name="Clark L.M."/>
            <person name="Cohn J.D."/>
            <person name="Denys M."/>
            <person name="Detter J.C."/>
            <person name="Dickson M."/>
            <person name="Dimitrijevic-Bussod M."/>
            <person name="Escobar J."/>
            <person name="Fawcett J.J."/>
            <person name="Flowers D."/>
            <person name="Fotopulos D."/>
            <person name="Glavina T."/>
            <person name="Gomez M."/>
            <person name="Gonzales E."/>
            <person name="Goodstein D."/>
            <person name="Goodwin L.A."/>
            <person name="Grady D.L."/>
            <person name="Grigoriev I."/>
            <person name="Groza M."/>
            <person name="Hammon N."/>
            <person name="Hawkins T."/>
            <person name="Haydu L."/>
            <person name="Hildebrand C.E."/>
            <person name="Huang W."/>
            <person name="Israni S."/>
            <person name="Jett J."/>
            <person name="Jewett P.B."/>
            <person name="Kadner K."/>
            <person name="Kimball H."/>
            <person name="Kobayashi A."/>
            <person name="Krawczyk M.-C."/>
            <person name="Leyba T."/>
            <person name="Longmire J.L."/>
            <person name="Lopez F."/>
            <person name="Lou Y."/>
            <person name="Lowry S."/>
            <person name="Ludeman T."/>
            <person name="Manohar C.F."/>
            <person name="Mark G.A."/>
            <person name="McMurray K.L."/>
            <person name="Meincke L.J."/>
            <person name="Morgan J."/>
            <person name="Moyzis R.K."/>
            <person name="Mundt M.O."/>
            <person name="Munk A.C."/>
            <person name="Nandkeshwar R.D."/>
            <person name="Pitluck S."/>
            <person name="Pollard M."/>
            <person name="Predki P."/>
            <person name="Parson-Quintana B."/>
            <person name="Ramirez L."/>
            <person name="Rash S."/>
            <person name="Retterer J."/>
            <person name="Ricke D.O."/>
            <person name="Robinson D.L."/>
            <person name="Rodriguez A."/>
            <person name="Salamov A."/>
            <person name="Saunders E.H."/>
            <person name="Scott D."/>
            <person name="Shough T."/>
            <person name="Stallings R.L."/>
            <person name="Stalvey M."/>
            <person name="Sutherland R.D."/>
            <person name="Tapia R."/>
            <person name="Tesmer J.G."/>
            <person name="Thayer N."/>
            <person name="Thompson L.S."/>
            <person name="Tice H."/>
            <person name="Torney D.C."/>
            <person name="Tran-Gyamfi M."/>
            <person name="Tsai M."/>
            <person name="Ulanovsky L.E."/>
            <person name="Ustaszewska A."/>
            <person name="Vo N."/>
            <person name="White P.S."/>
            <person name="Williams A.L."/>
            <person name="Wills P.L."/>
            <person name="Wu J.-R."/>
            <person name="Wu K."/>
            <person name="Yang J."/>
            <person name="DeJong P."/>
            <person name="Bruce D."/>
            <person name="Doggett N.A."/>
            <person name="Deaven L."/>
            <person name="Schmutz J."/>
            <person name="Grimwood J."/>
            <person name="Richardson P."/>
            <person name="Rokhsar D.S."/>
            <person name="Eichler E.E."/>
            <person name="Gilna P."/>
            <person name="Lucas S.M."/>
            <person name="Myers R.M."/>
            <person name="Rubin E.M."/>
            <person name="Pennacchio L.A."/>
        </authorList>
    </citation>
    <scope>NUCLEOTIDE SEQUENCE [LARGE SCALE GENOMIC DNA]</scope>
</reference>
<keyword id="KW-1185">Reference proteome</keyword>
<dbReference type="EMBL" id="AK126166">
    <property type="protein sequence ID" value="BAG54291.1"/>
    <property type="molecule type" value="mRNA"/>
</dbReference>
<dbReference type="EMBL" id="AK291749">
    <property type="protein sequence ID" value="BAF84438.1"/>
    <property type="molecule type" value="mRNA"/>
</dbReference>
<dbReference type="EMBL" id="AF001549">
    <property type="protein sequence ID" value="AAC27822.1"/>
    <property type="status" value="ALT_SEQ"/>
    <property type="molecule type" value="Genomic_DNA"/>
</dbReference>
<dbReference type="SMR" id="Q2M238"/>
<dbReference type="iPTMnet" id="Q2M238"/>
<dbReference type="BioMuta" id="HGNC:30548"/>
<dbReference type="jPOST" id="Q2M238"/>
<dbReference type="MassIVE" id="Q2M238"/>
<dbReference type="AGR" id="HGNC:30548"/>
<dbReference type="GeneCards" id="RRN3P1"/>
<dbReference type="HGNC" id="HGNC:30548">
    <property type="gene designation" value="RRN3P1"/>
</dbReference>
<dbReference type="neXtProt" id="NX_Q2M238"/>
<dbReference type="InParanoid" id="Q2M238"/>
<dbReference type="PAN-GO" id="Q2M238">
    <property type="GO annotations" value="4 GO annotations based on evolutionary models"/>
</dbReference>
<dbReference type="PhylomeDB" id="Q2M238"/>
<dbReference type="Pharos" id="Q2M238">
    <property type="development level" value="Tdark"/>
</dbReference>
<dbReference type="Proteomes" id="UP000005640">
    <property type="component" value="Unplaced"/>
</dbReference>
<dbReference type="RNAct" id="Q2M238">
    <property type="molecule type" value="protein"/>
</dbReference>
<dbReference type="GO" id="GO:0001181">
    <property type="term" value="F:RNA polymerase I general transcription initiation factor activity"/>
    <property type="evidence" value="ECO:0007669"/>
    <property type="project" value="InterPro"/>
</dbReference>
<dbReference type="GO" id="GO:0006361">
    <property type="term" value="P:transcription initiation at RNA polymerase I promoter"/>
    <property type="evidence" value="ECO:0007669"/>
    <property type="project" value="InterPro"/>
</dbReference>
<dbReference type="InterPro" id="IPR007991">
    <property type="entry name" value="RNA_pol_I_trans_ini_fac_RRN3"/>
</dbReference>
<dbReference type="PANTHER" id="PTHR12790:SF0">
    <property type="entry name" value="RNA POLYMERASE I-SPECIFIC TRANSCRIPTION INITIATION FACTOR RRN3-RELATED"/>
    <property type="match status" value="1"/>
</dbReference>
<dbReference type="PANTHER" id="PTHR12790">
    <property type="entry name" value="TRANSCRIPTION INITIATION FACTOR IA RRN3"/>
    <property type="match status" value="1"/>
</dbReference>
<dbReference type="Pfam" id="PF05327">
    <property type="entry name" value="RRN3"/>
    <property type="match status" value="1"/>
</dbReference>
<gene>
    <name type="primary">RRN3P1</name>
</gene>
<protein>
    <recommendedName>
        <fullName>Putative RRN3-like protein RRN3P1</fullName>
    </recommendedName>
    <alternativeName>
        <fullName>RNA polymerase I transcription factor homolog pseudogene 1</fullName>
    </alternativeName>
</protein>
<sequence>MGFAEAFLEHLWKNLQDPSNPAIIRQAAGNYIGSFLARAKFISLITVKPCLDLLVNWLHIYLNNQDSGTKAFCDVALHGPFYSACQAVFYTFVFRHKQLLSGNLKEGLQYPQSLNFERIVMSQLNPLKICLPSVVNFFAAITKMKTCGYGWW</sequence>
<accession>Q2M238</accession>
<accession>A8K6T4</accession>
<accession>B3KWX9</accession>
<accession>O75704</accession>
<comment type="similarity">
    <text evidence="1">Belongs to the RRN3 family.</text>
</comment>
<comment type="caution">
    <text evidence="1">Could be the product of a pseudogene.</text>
</comment>
<comment type="sequence caution" evidence="1">
    <conflict type="erroneous gene model prediction">
        <sequence resource="EMBL-CDS" id="AAC27822"/>
    </conflict>
</comment>
<organism>
    <name type="scientific">Homo sapiens</name>
    <name type="common">Human</name>
    <dbReference type="NCBI Taxonomy" id="9606"/>
    <lineage>
        <taxon>Eukaryota</taxon>
        <taxon>Metazoa</taxon>
        <taxon>Chordata</taxon>
        <taxon>Craniata</taxon>
        <taxon>Vertebrata</taxon>
        <taxon>Euteleostomi</taxon>
        <taxon>Mammalia</taxon>
        <taxon>Eutheria</taxon>
        <taxon>Euarchontoglires</taxon>
        <taxon>Primates</taxon>
        <taxon>Haplorrhini</taxon>
        <taxon>Catarrhini</taxon>
        <taxon>Hominidae</taxon>
        <taxon>Homo</taxon>
    </lineage>
</organism>
<feature type="chain" id="PRO_0000322440" description="Putative RRN3-like protein RRN3P1">
    <location>
        <begin position="1"/>
        <end position="152"/>
    </location>
</feature>
<feature type="sequence conflict" description="In Ref. 1; BAF84438." evidence="1" ref="1">
    <original>D</original>
    <variation>N</variation>
    <location>
        <position position="74"/>
    </location>
</feature>
<evidence type="ECO:0000305" key="1"/>